<gene>
    <name type="primary">MT-CYB</name>
    <name type="synonym">COB</name>
    <name type="synonym">CYTB</name>
    <name type="synonym">MTCYB</name>
</gene>
<reference key="1">
    <citation type="submission" date="1999-06" db="EMBL/GenBank/DDBJ databases">
        <title>Molecular systematics of river dolphins inferred from complete mitochondrial cytochrome b gene sequences.</title>
        <authorList>
            <person name="Yang G."/>
            <person name="Zhou K."/>
            <person name="Bastida R."/>
            <person name="Rivero L."/>
        </authorList>
    </citation>
    <scope>NUCLEOTIDE SEQUENCE [GENOMIC DNA]</scope>
    <source>
        <strain>Isolate NJNU0344</strain>
    </source>
</reference>
<reference key="2">
    <citation type="journal article" date="2000" name="Proc. Natl. Acad. Sci. U.S.A.">
        <title>Independent adaptation to riverine habitats allowed survival of ancient cetacean lineages.</title>
        <authorList>
            <person name="Cassens I."/>
            <person name="Vicario S."/>
            <person name="Waddell V.G."/>
            <person name="Balchowsky H."/>
            <person name="Van Belle D."/>
            <person name="Ding W."/>
            <person name="Fan C."/>
            <person name="Mohan L."/>
            <person name="Simoes-Lopes P.C."/>
            <person name="Bastida R."/>
            <person name="Meyer A."/>
            <person name="Stanhope M.J."/>
            <person name="Milinkovitch M.C."/>
        </authorList>
    </citation>
    <scope>NUCLEOTIDE SEQUENCE [GENOMIC DNA]</scope>
</reference>
<dbReference type="EMBL" id="AF158375">
    <property type="protein sequence ID" value="AAF75127.1"/>
    <property type="molecule type" value="Genomic_DNA"/>
</dbReference>
<dbReference type="EMBL" id="AF304071">
    <property type="protein sequence ID" value="AAG30914.1"/>
    <property type="molecule type" value="Genomic_DNA"/>
</dbReference>
<dbReference type="RefSeq" id="YP_423961.1">
    <property type="nucleotide sequence ID" value="NC_007629.1"/>
</dbReference>
<dbReference type="SMR" id="Q9MI64"/>
<dbReference type="GeneID" id="3802092"/>
<dbReference type="KEGG" id="lve:3802092"/>
<dbReference type="CTD" id="4519"/>
<dbReference type="OrthoDB" id="11592at9721"/>
<dbReference type="Proteomes" id="UP000265300">
    <property type="component" value="Mitochondrion MT"/>
</dbReference>
<dbReference type="GO" id="GO:0005743">
    <property type="term" value="C:mitochondrial inner membrane"/>
    <property type="evidence" value="ECO:0007669"/>
    <property type="project" value="UniProtKB-SubCell"/>
</dbReference>
<dbReference type="GO" id="GO:0045275">
    <property type="term" value="C:respiratory chain complex III"/>
    <property type="evidence" value="ECO:0007669"/>
    <property type="project" value="InterPro"/>
</dbReference>
<dbReference type="GO" id="GO:0046872">
    <property type="term" value="F:metal ion binding"/>
    <property type="evidence" value="ECO:0007669"/>
    <property type="project" value="UniProtKB-KW"/>
</dbReference>
<dbReference type="GO" id="GO:0008121">
    <property type="term" value="F:ubiquinol-cytochrome-c reductase activity"/>
    <property type="evidence" value="ECO:0007669"/>
    <property type="project" value="InterPro"/>
</dbReference>
<dbReference type="GO" id="GO:0006122">
    <property type="term" value="P:mitochondrial electron transport, ubiquinol to cytochrome c"/>
    <property type="evidence" value="ECO:0007669"/>
    <property type="project" value="TreeGrafter"/>
</dbReference>
<dbReference type="CDD" id="cd00290">
    <property type="entry name" value="cytochrome_b_C"/>
    <property type="match status" value="1"/>
</dbReference>
<dbReference type="CDD" id="cd00284">
    <property type="entry name" value="Cytochrome_b_N"/>
    <property type="match status" value="1"/>
</dbReference>
<dbReference type="FunFam" id="1.20.810.10:FF:000002">
    <property type="entry name" value="Cytochrome b"/>
    <property type="match status" value="1"/>
</dbReference>
<dbReference type="Gene3D" id="1.20.810.10">
    <property type="entry name" value="Cytochrome Bc1 Complex, Chain C"/>
    <property type="match status" value="1"/>
</dbReference>
<dbReference type="InterPro" id="IPR005798">
    <property type="entry name" value="Cyt_b/b6_C"/>
</dbReference>
<dbReference type="InterPro" id="IPR036150">
    <property type="entry name" value="Cyt_b/b6_C_sf"/>
</dbReference>
<dbReference type="InterPro" id="IPR005797">
    <property type="entry name" value="Cyt_b/b6_N"/>
</dbReference>
<dbReference type="InterPro" id="IPR027387">
    <property type="entry name" value="Cytb/b6-like_sf"/>
</dbReference>
<dbReference type="InterPro" id="IPR030689">
    <property type="entry name" value="Cytochrome_b"/>
</dbReference>
<dbReference type="InterPro" id="IPR048260">
    <property type="entry name" value="Cytochrome_b_C_euk/bac"/>
</dbReference>
<dbReference type="InterPro" id="IPR048259">
    <property type="entry name" value="Cytochrome_b_N_euk/bac"/>
</dbReference>
<dbReference type="InterPro" id="IPR016174">
    <property type="entry name" value="Di-haem_cyt_TM"/>
</dbReference>
<dbReference type="PANTHER" id="PTHR19271">
    <property type="entry name" value="CYTOCHROME B"/>
    <property type="match status" value="1"/>
</dbReference>
<dbReference type="PANTHER" id="PTHR19271:SF16">
    <property type="entry name" value="CYTOCHROME B"/>
    <property type="match status" value="1"/>
</dbReference>
<dbReference type="Pfam" id="PF00032">
    <property type="entry name" value="Cytochrom_B_C"/>
    <property type="match status" value="1"/>
</dbReference>
<dbReference type="Pfam" id="PF00033">
    <property type="entry name" value="Cytochrome_B"/>
    <property type="match status" value="1"/>
</dbReference>
<dbReference type="PIRSF" id="PIRSF038885">
    <property type="entry name" value="COB"/>
    <property type="match status" value="1"/>
</dbReference>
<dbReference type="SUPFAM" id="SSF81648">
    <property type="entry name" value="a domain/subunit of cytochrome bc1 complex (Ubiquinol-cytochrome c reductase)"/>
    <property type="match status" value="1"/>
</dbReference>
<dbReference type="SUPFAM" id="SSF81342">
    <property type="entry name" value="Transmembrane di-heme cytochromes"/>
    <property type="match status" value="1"/>
</dbReference>
<dbReference type="PROSITE" id="PS51003">
    <property type="entry name" value="CYTB_CTER"/>
    <property type="match status" value="1"/>
</dbReference>
<dbReference type="PROSITE" id="PS51002">
    <property type="entry name" value="CYTB_NTER"/>
    <property type="match status" value="1"/>
</dbReference>
<comment type="function">
    <text evidence="2">Component of the ubiquinol-cytochrome c reductase complex (complex III or cytochrome b-c1 complex) that is part of the mitochondrial respiratory chain. The b-c1 complex mediates electron transfer from ubiquinol to cytochrome c. Contributes to the generation of a proton gradient across the mitochondrial membrane that is then used for ATP synthesis.</text>
</comment>
<comment type="cofactor">
    <cofactor evidence="2">
        <name>heme b</name>
        <dbReference type="ChEBI" id="CHEBI:60344"/>
    </cofactor>
    <text evidence="2">Binds 2 heme b groups non-covalently.</text>
</comment>
<comment type="subunit">
    <text evidence="2">The cytochrome bc1 complex contains 11 subunits: 3 respiratory subunits (MT-CYB, CYC1 and UQCRFS1), 2 core proteins (UQCRC1 and UQCRC2) and 6 low-molecular weight proteins (UQCRH/QCR6, UQCRB/QCR7, UQCRQ/QCR8, UQCR10/QCR9, UQCR11/QCR10 and a cleavage product of UQCRFS1). This cytochrome bc1 complex then forms a dimer.</text>
</comment>
<comment type="subcellular location">
    <subcellularLocation>
        <location evidence="2">Mitochondrion inner membrane</location>
        <topology evidence="2">Multi-pass membrane protein</topology>
    </subcellularLocation>
</comment>
<comment type="miscellaneous">
    <text evidence="1">Heme 1 (or BL or b562) is low-potential and absorbs at about 562 nm, and heme 2 (or BH or b566) is high-potential and absorbs at about 566 nm.</text>
</comment>
<comment type="similarity">
    <text evidence="3 4">Belongs to the cytochrome b family.</text>
</comment>
<comment type="caution">
    <text evidence="2">The full-length protein contains only eight transmembrane helices, not nine as predicted by bioinformatics tools.</text>
</comment>
<keyword id="KW-0249">Electron transport</keyword>
<keyword id="KW-0349">Heme</keyword>
<keyword id="KW-0408">Iron</keyword>
<keyword id="KW-0472">Membrane</keyword>
<keyword id="KW-0479">Metal-binding</keyword>
<keyword id="KW-0496">Mitochondrion</keyword>
<keyword id="KW-0999">Mitochondrion inner membrane</keyword>
<keyword id="KW-1185">Reference proteome</keyword>
<keyword id="KW-0679">Respiratory chain</keyword>
<keyword id="KW-0812">Transmembrane</keyword>
<keyword id="KW-1133">Transmembrane helix</keyword>
<keyword id="KW-0813">Transport</keyword>
<keyword id="KW-0830">Ubiquinone</keyword>
<evidence type="ECO:0000250" key="1"/>
<evidence type="ECO:0000250" key="2">
    <source>
        <dbReference type="UniProtKB" id="P00157"/>
    </source>
</evidence>
<evidence type="ECO:0000255" key="3">
    <source>
        <dbReference type="PROSITE-ProRule" id="PRU00967"/>
    </source>
</evidence>
<evidence type="ECO:0000255" key="4">
    <source>
        <dbReference type="PROSITE-ProRule" id="PRU00968"/>
    </source>
</evidence>
<geneLocation type="mitochondrion"/>
<protein>
    <recommendedName>
        <fullName>Cytochrome b</fullName>
    </recommendedName>
    <alternativeName>
        <fullName>Complex III subunit 3</fullName>
    </alternativeName>
    <alternativeName>
        <fullName>Complex III subunit III</fullName>
    </alternativeName>
    <alternativeName>
        <fullName>Cytochrome b-c1 complex subunit 3</fullName>
    </alternativeName>
    <alternativeName>
        <fullName>Ubiquinol-cytochrome-c reductase complex cytochrome b subunit</fullName>
    </alternativeName>
</protein>
<accession>Q9MI64</accession>
<proteinExistence type="inferred from homology"/>
<organism>
    <name type="scientific">Lipotes vexillifer</name>
    <name type="common">Yangtze river dolphin</name>
    <dbReference type="NCBI Taxonomy" id="118797"/>
    <lineage>
        <taxon>Eukaryota</taxon>
        <taxon>Metazoa</taxon>
        <taxon>Chordata</taxon>
        <taxon>Craniata</taxon>
        <taxon>Vertebrata</taxon>
        <taxon>Euteleostomi</taxon>
        <taxon>Mammalia</taxon>
        <taxon>Eutheria</taxon>
        <taxon>Laurasiatheria</taxon>
        <taxon>Artiodactyla</taxon>
        <taxon>Whippomorpha</taxon>
        <taxon>Cetacea</taxon>
        <taxon>Odontoceti</taxon>
        <taxon>Lipotidae</taxon>
        <taxon>Lipotes</taxon>
    </lineage>
</organism>
<name>CYB_LIPVE</name>
<sequence>MTNIRKTHPLMKILNKTFIDLPTPSNISSWWNFGSLLGLCLTVQILTGLFLAMHYTPDTSTAFSSITHICRDVNYGWMIRHLHANGASMFFICLYIHIGRGLYYGSYLFKKTWNIGVLLLFTTMATAFMGYVLPWGQMSFWGATVITNLLSAIPYIGTTLVEWVWGGFSVDKATLTRFFALHFILPFIIVALTTVHLLFLHETGSNNPMGIPSNMDKIPFHPYHTIKDILGALLLMFVLLTLTLLAPDLLGDPDNYTPANPLNTPAHIKPEWYFLFAYAILRSIPNKLGGVLALLFSILILLFIPLLHTSKQRSMMFRPLSQLLFWLLMTDLLVLTWIGGQPVEHPYIIMGQLASILYFLLILVMMPTASFIENKILKW</sequence>
<feature type="chain" id="PRO_0000061125" description="Cytochrome b">
    <location>
        <begin position="1"/>
        <end position="379"/>
    </location>
</feature>
<feature type="transmembrane region" description="Helical" evidence="2">
    <location>
        <begin position="33"/>
        <end position="53"/>
    </location>
</feature>
<feature type="transmembrane region" description="Helical" evidence="2">
    <location>
        <begin position="77"/>
        <end position="98"/>
    </location>
</feature>
<feature type="transmembrane region" description="Helical" evidence="2">
    <location>
        <begin position="113"/>
        <end position="133"/>
    </location>
</feature>
<feature type="transmembrane region" description="Helical" evidence="2">
    <location>
        <begin position="178"/>
        <end position="198"/>
    </location>
</feature>
<feature type="transmembrane region" description="Helical" evidence="2">
    <location>
        <begin position="226"/>
        <end position="246"/>
    </location>
</feature>
<feature type="transmembrane region" description="Helical" evidence="2">
    <location>
        <begin position="288"/>
        <end position="308"/>
    </location>
</feature>
<feature type="transmembrane region" description="Helical" evidence="2">
    <location>
        <begin position="320"/>
        <end position="340"/>
    </location>
</feature>
<feature type="transmembrane region" description="Helical" evidence="2">
    <location>
        <begin position="347"/>
        <end position="367"/>
    </location>
</feature>
<feature type="binding site" description="axial binding residue" evidence="2">
    <location>
        <position position="83"/>
    </location>
    <ligand>
        <name>heme b</name>
        <dbReference type="ChEBI" id="CHEBI:60344"/>
        <label>b562</label>
    </ligand>
    <ligandPart>
        <name>Fe</name>
        <dbReference type="ChEBI" id="CHEBI:18248"/>
    </ligandPart>
</feature>
<feature type="binding site" description="axial binding residue" evidence="2">
    <location>
        <position position="97"/>
    </location>
    <ligand>
        <name>heme b</name>
        <dbReference type="ChEBI" id="CHEBI:60344"/>
        <label>b566</label>
    </ligand>
    <ligandPart>
        <name>Fe</name>
        <dbReference type="ChEBI" id="CHEBI:18248"/>
    </ligandPart>
</feature>
<feature type="binding site" description="axial binding residue" evidence="2">
    <location>
        <position position="182"/>
    </location>
    <ligand>
        <name>heme b</name>
        <dbReference type="ChEBI" id="CHEBI:60344"/>
        <label>b562</label>
    </ligand>
    <ligandPart>
        <name>Fe</name>
        <dbReference type="ChEBI" id="CHEBI:18248"/>
    </ligandPart>
</feature>
<feature type="binding site" description="axial binding residue" evidence="2">
    <location>
        <position position="196"/>
    </location>
    <ligand>
        <name>heme b</name>
        <dbReference type="ChEBI" id="CHEBI:60344"/>
        <label>b566</label>
    </ligand>
    <ligandPart>
        <name>Fe</name>
        <dbReference type="ChEBI" id="CHEBI:18248"/>
    </ligandPart>
</feature>
<feature type="binding site" evidence="2">
    <location>
        <position position="201"/>
    </location>
    <ligand>
        <name>a ubiquinone</name>
        <dbReference type="ChEBI" id="CHEBI:16389"/>
    </ligand>
</feature>